<feature type="peptide" id="PRO_0000441658" description="Conotoxin ar5a" evidence="2">
    <location>
        <begin position="1"/>
        <end position="11"/>
    </location>
</feature>
<feature type="disulfide bond" evidence="1">
    <location>
        <begin position="2"/>
        <end position="11"/>
    </location>
</feature>
<feature type="disulfide bond" evidence="1">
    <location>
        <begin position="3"/>
        <end position="8"/>
    </location>
</feature>
<feature type="unsure residue" description="I or L" evidence="3">
    <location>
        <position position="10"/>
    </location>
</feature>
<sequence length="11" mass="1333">RCCGYKFCHIC</sequence>
<organism evidence="3">
    <name type="scientific">Conus araneosus</name>
    <name type="common">Cobweb cone</name>
    <dbReference type="NCBI Taxonomy" id="101286"/>
    <lineage>
        <taxon>Eukaryota</taxon>
        <taxon>Metazoa</taxon>
        <taxon>Spiralia</taxon>
        <taxon>Lophotrochozoa</taxon>
        <taxon>Mollusca</taxon>
        <taxon>Gastropoda</taxon>
        <taxon>Caenogastropoda</taxon>
        <taxon>Neogastropoda</taxon>
        <taxon>Conoidea</taxon>
        <taxon>Conidae</taxon>
        <taxon>Conus</taxon>
    </lineage>
</organism>
<proteinExistence type="evidence at protein level"/>
<comment type="subcellular location">
    <subcellularLocation>
        <location evidence="2">Secreted</location>
    </subcellularLocation>
</comment>
<comment type="tissue specificity">
    <text evidence="5">Expressed by the venom duct.</text>
</comment>
<comment type="domain">
    <text evidence="3">The cysteine framework is X (CC-C-C).</text>
</comment>
<comment type="mass spectrometry" mass="1327.5" method="MALDI" evidence="2"/>
<comment type="similarity">
    <text evidence="4">Belongs to the conotoxin T superfamily.</text>
</comment>
<protein>
    <recommendedName>
        <fullName evidence="3">Conotoxin ar5a</fullName>
    </recommendedName>
</protein>
<evidence type="ECO:0000250" key="1">
    <source>
        <dbReference type="UniProtKB" id="P0CI23"/>
    </source>
</evidence>
<evidence type="ECO:0000269" key="2">
    <source>
    </source>
</evidence>
<evidence type="ECO:0000303" key="3">
    <source>
    </source>
</evidence>
<evidence type="ECO:0000305" key="4"/>
<evidence type="ECO:0000305" key="5">
    <source>
    </source>
</evidence>
<keyword id="KW-0903">Direct protein sequencing</keyword>
<keyword id="KW-1015">Disulfide bond</keyword>
<keyword id="KW-0964">Secreted</keyword>
<keyword id="KW-0800">Toxin</keyword>
<accession>C0HKY2</accession>
<dbReference type="GO" id="GO:0005576">
    <property type="term" value="C:extracellular region"/>
    <property type="evidence" value="ECO:0000314"/>
    <property type="project" value="UniProtKB"/>
</dbReference>
<dbReference type="GO" id="GO:0090729">
    <property type="term" value="F:toxin activity"/>
    <property type="evidence" value="ECO:0007669"/>
    <property type="project" value="UniProtKB-KW"/>
</dbReference>
<reference evidence="4" key="1">
    <citation type="journal article" date="2015" name="Toxicon">
        <title>A sleep-inducing peptide from the venom of the Indian cone snail Conus araneosus.</title>
        <authorList>
            <person name="Franklin J.B."/>
            <person name="Rajesh R.P."/>
        </authorList>
    </citation>
    <scope>PROTEIN SEQUENCE</scope>
    <scope>SUBCELLULAR LOCATION</scope>
    <scope>MASS SPECTROMETRY</scope>
    <scope>IDENTIFICATION BY MASS SPECTROMETRY</scope>
    <source>
        <tissue evidence="3">Venom</tissue>
    </source>
</reference>
<name>CT10A_CONAO</name>